<reference key="1">
    <citation type="journal article" date="1992" name="Biochem. Biophys. Res. Commun.">
        <title>The primary structure of mouse saposin.</title>
        <authorList>
            <person name="Tsuda M."/>
            <person name="Sakiyama T."/>
            <person name="Endo H."/>
            <person name="Kitagawa T."/>
        </authorList>
    </citation>
    <scope>NUCLEOTIDE SEQUENCE [MRNA]</scope>
    <source>
        <tissue>Liver</tissue>
    </source>
</reference>
<reference key="2">
    <citation type="journal article" date="1993" name="Cell. Mol. Biol.">
        <title>Murine prosaposin: expression in the reproductive system of a gene implicated in human genetic diseases.</title>
        <authorList>
            <person name="Sprecher-Levy H."/>
            <person name="Orr-Urtreger A."/>
            <person name="Lonai P."/>
            <person name="Horowitz M."/>
        </authorList>
    </citation>
    <scope>NUCLEOTIDE SEQUENCE</scope>
</reference>
<reference key="3">
    <citation type="journal article" date="1994" name="Cell. Mol. Biol.">
        <authorList>
            <person name="Sprecher-Levy H."/>
            <person name="Orr-Urtreger A."/>
            <person name="Lonai P."/>
            <person name="Horowitz M."/>
        </authorList>
    </citation>
    <scope>ERRATUM OF PUBMED:8334382</scope>
</reference>
<reference key="4">
    <citation type="journal article" date="1995" name="Dev. Genet.">
        <title>Expression of SGP-1 mRNA in preimplantation mouse embryos.</title>
        <authorList>
            <person name="Cao Q.P."/>
            <person name="Crain W.R."/>
        </authorList>
    </citation>
    <scope>NUCLEOTIDE SEQUENCE [MRNA]</scope>
</reference>
<reference key="5">
    <citation type="submission" date="1996-05" db="EMBL/GenBank/DDBJ databases">
        <authorList>
            <person name="Zhao Q.Q."/>
            <person name="Hay N.N."/>
            <person name="Morales C.R."/>
        </authorList>
    </citation>
    <scope>NUCLEOTIDE SEQUENCE</scope>
    <source>
        <strain>BALB/cJ</strain>
        <tissue>Liver</tissue>
    </source>
</reference>
<reference key="6">
    <citation type="submission" date="2007-04" db="UniProtKB">
        <authorList>
            <person name="Lubec G."/>
            <person name="Kang S.U."/>
        </authorList>
    </citation>
    <scope>PROTEIN SEQUENCE OF 68-78 AND 463-482</scope>
    <scope>IDENTIFICATION BY MASS SPECTROMETRY</scope>
    <source>
        <strain>C57BL/6J</strain>
        <tissue>Brain</tissue>
    </source>
</reference>
<reference key="7">
    <citation type="journal article" date="2009" name="Nat. Biotechnol.">
        <title>Mass-spectrometric identification and relative quantification of N-linked cell surface glycoproteins.</title>
        <authorList>
            <person name="Wollscheid B."/>
            <person name="Bausch-Fluck D."/>
            <person name="Henderson C."/>
            <person name="O'Brien R."/>
            <person name="Bibel M."/>
            <person name="Schiess R."/>
            <person name="Aebersold R."/>
            <person name="Watts J.D."/>
        </authorList>
    </citation>
    <scope>GLYCOSYLATION [LARGE SCALE ANALYSIS] AT ASN-80 AND ASN-334</scope>
</reference>
<reference key="8">
    <citation type="journal article" date="2010" name="Cell">
        <title>A tissue-specific atlas of mouse protein phosphorylation and expression.</title>
        <authorList>
            <person name="Huttlin E.L."/>
            <person name="Jedrychowski M.P."/>
            <person name="Elias J.E."/>
            <person name="Goswami T."/>
            <person name="Rad R."/>
            <person name="Beausoleil S.A."/>
            <person name="Villen J."/>
            <person name="Haas W."/>
            <person name="Sowa M.E."/>
            <person name="Gygi S.P."/>
        </authorList>
    </citation>
    <scope>IDENTIFICATION BY MASS SPECTROMETRY [LARGE SCALE ANALYSIS]</scope>
    <source>
        <tissue>Brain</tissue>
        <tissue>Brown adipose tissue</tissue>
        <tissue>Heart</tissue>
        <tissue>Kidney</tissue>
        <tissue>Liver</tissue>
        <tissue>Lung</tissue>
        <tissue>Spleen</tissue>
        <tissue>Testis</tissue>
    </source>
</reference>
<reference key="9">
    <citation type="journal article" date="2013" name="Proc. Natl. Acad. Sci. U.S.A.">
        <title>GPR37 and GPR37L1 are receptors for the neuroprotective and glioprotective factors prosaptide and prosaposin.</title>
        <authorList>
            <person name="Meyer R.C."/>
            <person name="Giddens M.M."/>
            <person name="Schaefer S.A."/>
            <person name="Hall R.A."/>
        </authorList>
    </citation>
    <scope>FUNCTION</scope>
    <scope>SUBCELLULAR LOCATION</scope>
</reference>
<reference key="10">
    <citation type="journal article" date="2015" name="J. Cell Biol.">
        <title>Prosaposin facilitates sortilin-independent lysosomal trafficking of progranulin.</title>
        <authorList>
            <person name="Zhou X."/>
            <person name="Sun L."/>
            <person name="Bastos de Oliveira F."/>
            <person name="Qi X."/>
            <person name="Brown W.J."/>
            <person name="Smolka M.B."/>
            <person name="Sun Y."/>
            <person name="Hu F."/>
        </authorList>
    </citation>
    <scope>INTERACTION WITH GRN</scope>
</reference>
<reference key="11">
    <citation type="journal article" date="2020" name="Brain">
        <title>Variants in saposin D domain of prosaposin gene linked to Parkinson's disease.</title>
        <authorList>
            <person name="Oji Y."/>
            <person name="Hatano T."/>
            <person name="Ueno S.I."/>
            <person name="Funayama M."/>
            <person name="Ishikawa K.I."/>
            <person name="Okuzumi A."/>
            <person name="Noda S."/>
            <person name="Sato S."/>
            <person name="Satake W."/>
            <person name="Toda T."/>
            <person name="Li Y."/>
            <person name="Hino-Takai T."/>
            <person name="Kakuta S."/>
            <person name="Tsunemi T."/>
            <person name="Yoshino H."/>
            <person name="Nishioka K."/>
            <person name="Hattori T."/>
            <person name="Mizutani Y."/>
            <person name="Mutoh T."/>
            <person name="Yokochi F."/>
            <person name="Ichinose Y."/>
            <person name="Koh K."/>
            <person name="Shindo K."/>
            <person name="Takiyama Y."/>
            <person name="Hamaguchi T."/>
            <person name="Yamada M."/>
            <person name="Farrer M.J."/>
            <person name="Uchiyama Y."/>
            <person name="Akamatsu W."/>
            <person name="Wu Y.R."/>
            <person name="Matsuda J."/>
            <person name="Hattori N."/>
        </authorList>
    </citation>
    <scope>MUTAGENESIS OF CYS-509</scope>
</reference>
<keyword id="KW-0002">3D-structure</keyword>
<keyword id="KW-0903">Direct protein sequencing</keyword>
<keyword id="KW-1015">Disulfide bond</keyword>
<keyword id="KW-0325">Glycoprotein</keyword>
<keyword id="KW-0458">Lysosome</keyword>
<keyword id="KW-1185">Reference proteome</keyword>
<keyword id="KW-0677">Repeat</keyword>
<keyword id="KW-0964">Secreted</keyword>
<keyword id="KW-0732">Signal</keyword>
<sequence length="557" mass="61422">MYALALFASLLATALTSPVQDPKTCSGGSAVLCRDVKTAVDCGAVKHCQQMVWSKPTAKSLPCDICKTVVTEAGNLLKDNATQEEILHYLEKTCEWIHDSSLSASCKEVVDSYLPVILDMIKGEMSNPGEVCSALNLCQSLQEYLAEQNQKQLESNKIPEVDMARVVAPFMSNIPLLLYPQDHPRSQPQPKANEDVCQDCMKLVSDVQTAVKTNSSFIQGFVDHVKEDCDRLGPGVSDICKNYVDQYSEVCVQMLMHMQDQQPKEICVLAGFCNEVKRVPMKTLVPATETIKNILPALEMMDPYEQNLVQAHNVILCQTCQFVMNKFSELIVNNATEELLVKGLSNACALLPDPARTKCQEVVGTFGPSLLDIFIHEVNPSSLCGVIGLCAARPELVEALEQPAPAIVSALLKEPTPPKQPAQPKQSALPAHVPPQKNGGFCEVCKKLVLYLEHNLEKNSTKEEILAALEKGCSFLPDPYQKQCDDFVAEYEPLLLEILVEVMDPGFVCSKIGVCPSAYKLLLGTEKCVWGPSYWCQNMETAARCNAVDHCKRHVWN</sequence>
<feature type="signal peptide" evidence="1">
    <location>
        <begin position="1"/>
        <end position="16"/>
    </location>
</feature>
<feature type="chain" id="PRO_0000031626" description="Prosaposin">
    <location>
        <begin position="17"/>
        <end position="557"/>
    </location>
</feature>
<feature type="propeptide" id="PRO_0000434953" evidence="1">
    <location>
        <begin position="17"/>
        <end position="59"/>
    </location>
</feature>
<feature type="chain" id="PRO_0000434954" description="Saposin-A" evidence="1">
    <location>
        <begin position="60"/>
        <end position="142"/>
    </location>
</feature>
<feature type="propeptide" id="PRO_0000434955" evidence="1">
    <location>
        <begin position="143"/>
        <end position="193"/>
    </location>
</feature>
<feature type="chain" id="PRO_0000434956" description="Saposin-B-Val" evidence="1">
    <location>
        <begin position="194"/>
        <end position="276"/>
    </location>
</feature>
<feature type="chain" id="PRO_0000434957" description="Saposin-B" evidence="1">
    <location>
        <begin position="194"/>
        <end position="275"/>
    </location>
</feature>
<feature type="propeptide" id="PRO_0000434958" evidence="1">
    <location>
        <begin position="277"/>
        <end position="312"/>
    </location>
</feature>
<feature type="chain" id="PRO_0000434959" description="Saposin-C" evidence="1">
    <location>
        <begin position="313"/>
        <end position="392" status="uncertain"/>
    </location>
</feature>
<feature type="propeptide" id="PRO_0000434960" evidence="1">
    <location>
        <begin position="393" status="uncertain"/>
        <end position="437"/>
    </location>
</feature>
<feature type="chain" id="PRO_0000434961" description="Saposin-D" evidence="1">
    <location>
        <begin position="438"/>
        <end position="519"/>
    </location>
</feature>
<feature type="propeptide" id="PRO_0000434962" evidence="1">
    <location>
        <begin position="520"/>
        <end position="557"/>
    </location>
</feature>
<feature type="domain" description="Saposin A-type 1" evidence="2">
    <location>
        <begin position="18"/>
        <end position="58"/>
    </location>
</feature>
<feature type="domain" description="Saposin B-type 1" evidence="3">
    <location>
        <begin position="59"/>
        <end position="142"/>
    </location>
</feature>
<feature type="domain" description="Saposin B-type 2" evidence="3">
    <location>
        <begin position="193"/>
        <end position="277"/>
    </location>
</feature>
<feature type="domain" description="Saposin B-type 3" evidence="3">
    <location>
        <begin position="313"/>
        <end position="394"/>
    </location>
</feature>
<feature type="domain" description="Saposin B-type 4" evidence="3">
    <location>
        <begin position="438"/>
        <end position="519"/>
    </location>
</feature>
<feature type="domain" description="Saposin A-type 2" evidence="2">
    <location>
        <begin position="521"/>
        <end position="557"/>
    </location>
</feature>
<feature type="glycosylation site" description="N-linked (GlcNAc...) asparagine" evidence="3 4">
    <location>
        <position position="80"/>
    </location>
</feature>
<feature type="glycosylation site" description="N-linked (GlcNAc...) asparagine" evidence="3">
    <location>
        <position position="214"/>
    </location>
</feature>
<feature type="glycosylation site" description="N-linked (GlcNAc...) asparagine" evidence="3 4">
    <location>
        <position position="334"/>
    </location>
</feature>
<feature type="glycosylation site" description="N-linked (GlcNAc...) asparagine" evidence="3">
    <location>
        <position position="459"/>
    </location>
</feature>
<feature type="disulfide bond" evidence="3">
    <location>
        <begin position="63"/>
        <end position="138"/>
    </location>
</feature>
<feature type="disulfide bond" evidence="3">
    <location>
        <begin position="66"/>
        <end position="132"/>
    </location>
</feature>
<feature type="disulfide bond" evidence="3">
    <location>
        <begin position="94"/>
        <end position="106"/>
    </location>
</feature>
<feature type="disulfide bond" evidence="3">
    <location>
        <begin position="197"/>
        <end position="273"/>
    </location>
</feature>
<feature type="disulfide bond" evidence="3">
    <location>
        <begin position="200"/>
        <end position="267"/>
    </location>
</feature>
<feature type="disulfide bond" evidence="3">
    <location>
        <begin position="229"/>
        <end position="240"/>
    </location>
</feature>
<feature type="disulfide bond" evidence="3">
    <location>
        <begin position="317"/>
        <end position="390"/>
    </location>
</feature>
<feature type="disulfide bond" evidence="3">
    <location>
        <begin position="320"/>
        <end position="384"/>
    </location>
</feature>
<feature type="disulfide bond" evidence="3">
    <location>
        <begin position="348"/>
        <end position="359"/>
    </location>
</feature>
<feature type="disulfide bond" evidence="3">
    <location>
        <begin position="442"/>
        <end position="515"/>
    </location>
</feature>
<feature type="disulfide bond" evidence="3">
    <location>
        <begin position="445"/>
        <end position="509"/>
    </location>
</feature>
<feature type="disulfide bond" evidence="3">
    <location>
        <begin position="473"/>
        <end position="484"/>
    </location>
</feature>
<feature type="mutagenesis site" description="Affects the intracellular trafficking, resulting in endoplasmic reticulum retention. Mice carrying homozygous and heterozygous C509S exhibit a progressive decline in locomotor function and a reduction in the number of tyrosine hydroxylase-positive neurons." evidence="7">
    <original>C</original>
    <variation>S</variation>
    <location>
        <position position="509"/>
    </location>
</feature>
<feature type="sequence conflict" description="In Ref. 2; AAB31059." evidence="8" ref="2">
    <original>Q</original>
    <variation>E</variation>
    <location>
        <position position="83"/>
    </location>
</feature>
<feature type="sequence conflict" description="In Ref. 4; AAA92567." evidence="8" ref="4">
    <original>I</original>
    <variation>V</variation>
    <location>
        <position position="158"/>
    </location>
</feature>
<feature type="sequence conflict" description="In Ref. 2; AAB31059." evidence="8" ref="2">
    <location>
        <position position="160"/>
    </location>
</feature>
<feature type="sequence conflict" description="In Ref. 4; AAA92567." evidence="8" ref="4">
    <original>MS</original>
    <variation>SA</variation>
    <location>
        <begin position="171"/>
        <end position="172"/>
    </location>
</feature>
<feature type="sequence conflict" description="In Ref. 2; AAB31059." evidence="8" ref="2">
    <original>V</original>
    <variation>L</variation>
    <location>
        <position position="244"/>
    </location>
</feature>
<feature type="sequence conflict" description="In Ref. 4; AAA92567." evidence="8" ref="4">
    <original>M</original>
    <variation>I</variation>
    <location>
        <position position="254"/>
    </location>
</feature>
<feature type="sequence conflict" description="In Ref. 2; AAB31059." evidence="8" ref="2">
    <original>L</original>
    <variation>W</variation>
    <location>
        <position position="255"/>
    </location>
</feature>
<feature type="sequence conflict" description="In Ref. 4." evidence="8" ref="4">
    <location>
        <begin position="260"/>
        <end position="262"/>
    </location>
</feature>
<feature type="sequence conflict" description="In Ref. 2; AAB31059." evidence="8" ref="2">
    <original>N</original>
    <variation>D</variation>
    <location>
        <position position="307"/>
    </location>
</feature>
<feature type="sequence conflict" description="In Ref. 2; AAB31059." evidence="8" ref="2">
    <original>F</original>
    <variation>L</variation>
    <location>
        <position position="322"/>
    </location>
</feature>
<feature type="sequence conflict" description="In Ref. 1; AAB22175." evidence="8" ref="1">
    <original>AL</original>
    <variation>GV</variation>
    <location>
        <begin position="349"/>
        <end position="350"/>
    </location>
</feature>
<feature type="sequence conflict" description="In Ref. 4; AAA92567." evidence="8" ref="4">
    <original>G</original>
    <variation>D</variation>
    <location>
        <position position="367"/>
    </location>
</feature>
<feature type="sequence conflict" description="In Ref. 2; AAB31059." evidence="8" ref="2">
    <original>L</original>
    <variation>Q</variation>
    <location>
        <position position="370"/>
    </location>
</feature>
<feature type="sequence conflict" description="In Ref. 4; AAA92567." evidence="8" ref="4">
    <original>I</original>
    <variation>D</variation>
    <location>
        <position position="373"/>
    </location>
</feature>
<feature type="sequence conflict" description="In Ref. 4." evidence="8" ref="4">
    <original>A</original>
    <variation>T</variation>
    <location>
        <position position="391"/>
    </location>
</feature>
<feature type="sequence conflict" description="In Ref. 4." evidence="8" ref="4">
    <original>R</original>
    <variation>L</variation>
    <location>
        <position position="393"/>
    </location>
</feature>
<feature type="sequence conflict" description="In Ref. 2 and 4." evidence="8" ref="2 4">
    <original>A</original>
    <variation>R</variation>
    <location>
        <position position="406"/>
    </location>
</feature>
<feature type="sequence conflict" description="In Ref. 2; AAB31059." evidence="8" ref="2">
    <original>P</original>
    <variation>R</variation>
    <location>
        <position position="430"/>
    </location>
</feature>
<feature type="sequence conflict" description="In Ref. 4; AAA92567." evidence="8" ref="4">
    <original>C</original>
    <variation>F</variation>
    <location>
        <position position="445"/>
    </location>
</feature>
<feature type="sequence conflict" description="In Ref. 5; AAB02695." evidence="8" ref="5">
    <original>L</original>
    <variation>P</variation>
    <location>
        <position position="448"/>
    </location>
</feature>
<feature type="helix" evidence="10">
    <location>
        <begin position="61"/>
        <end position="78"/>
    </location>
</feature>
<feature type="helix" evidence="10">
    <location>
        <begin position="80"/>
        <end position="94"/>
    </location>
</feature>
<feature type="helix" evidence="10">
    <location>
        <begin position="100"/>
        <end position="123"/>
    </location>
</feature>
<feature type="helix" evidence="10">
    <location>
        <begin position="128"/>
        <end position="133"/>
    </location>
</feature>
<feature type="turn" evidence="10">
    <location>
        <begin position="134"/>
        <end position="136"/>
    </location>
</feature>
<feature type="helix" evidence="9">
    <location>
        <begin position="442"/>
        <end position="455"/>
    </location>
</feature>
<feature type="helix" evidence="9">
    <location>
        <begin position="459"/>
        <end position="474"/>
    </location>
</feature>
<feature type="helix" evidence="9">
    <location>
        <begin position="480"/>
        <end position="502"/>
    </location>
</feature>
<feature type="helix" evidence="9">
    <location>
        <begin position="505"/>
        <end position="511"/>
    </location>
</feature>
<accession>Q61207</accession>
<accession>Q60861</accession>
<accession>Q64006</accession>
<accession>Q64219</accession>
<name>SAP_MOUSE</name>
<gene>
    <name type="primary">Psap</name>
    <name type="synonym">Sgp1</name>
</gene>
<protein>
    <recommendedName>
        <fullName>Prosaposin</fullName>
    </recommendedName>
    <alternativeName>
        <fullName>Sulfated glycoprotein 1</fullName>
        <shortName>SGP-1</shortName>
    </alternativeName>
    <component>
        <recommendedName>
            <fullName>Saposin-A</fullName>
        </recommendedName>
    </component>
    <component>
        <recommendedName>
            <fullName>Saposin-B-Val</fullName>
        </recommendedName>
    </component>
    <component>
        <recommendedName>
            <fullName>Saposin-B</fullName>
        </recommendedName>
    </component>
    <component>
        <recommendedName>
            <fullName>Saposin-C</fullName>
        </recommendedName>
    </component>
    <component>
        <recommendedName>
            <fullName>Saposin-D</fullName>
        </recommendedName>
    </component>
</protein>
<comment type="function">
    <molecule>Prosaposin</molecule>
    <text evidence="5">Behaves as a myelinotrophic and neurotrophic factor, these effects are mediated by its G-protein-coupled receptors, GPR37 and GPR37L1, undergoing ligand-mediated internalization followed by ERK phosphorylation signaling.</text>
</comment>
<comment type="function">
    <text evidence="1">Saposin-A and saposin-C stimulate the hydrolysis of glucosylceramide by beta-glucosylceramidase (EC 3.2.1.45) and galactosylceramide by beta-galactosylceramidase (EC 3.2.1.46). Saposin-C apparently acts by combining with the enzyme and acidic lipid to form an activated complex, rather than by solubilizing the substrate.</text>
</comment>
<comment type="function">
    <text evidence="1">Saposin-B stimulates the hydrolysis of galacto-cerebroside sulfate by arylsulfatase A (EC 3.1.6.8), GM1 gangliosides by beta-galactosidase (EC 3.2.1.23) and globotriaosylceramide by alpha-galactosidase A (EC 3.2.1.22). Saposin-B forms a solubilizing complex with the substrates of the sphingolipid hydrolases.</text>
</comment>
<comment type="function">
    <text evidence="1">Saposin-D is a specific sphingomyelin phosphodiesterase activator (EC 3.1.4.12).</text>
</comment>
<comment type="function">
    <text evidence="1">Saposins are specific low-molecular mass non-enzymatic proteins, they participate in the lysosomal degradation of sphingolipids, which takes place by the sequential action of specific hydrolases.</text>
</comment>
<comment type="subunit">
    <text evidence="1 6">Saposin-B is a homodimer. Prosaposin exists as a roughly half-half mixture of monomers and disulfide-linked dimers. Monomeric prosaposin interacts (via C-terminus) with sortilin/SORT1, the interaction is required for targeting to lysosomes. Interacts with GRN; facilitates lysosomal delivery of progranulin from the extracellular space and the biosynthetic pathway (PubMed:26370502).</text>
</comment>
<comment type="interaction">
    <interactant intactId="EBI-645756">
        <id>Q61207</id>
    </interactant>
    <interactant intactId="EBI-2365205">
        <id>P28798</id>
        <label>Grn</label>
    </interactant>
    <organismsDiffer>false</organismsDiffer>
    <experiments>4</experiments>
</comment>
<comment type="subcellular location">
    <molecule>Prosaposin</molecule>
    <subcellularLocation>
        <location evidence="5">Secreted</location>
    </subcellularLocation>
    <text evidence="5">Secreted as a fully glycosylated 70 kDa protein composed of complex glycans.</text>
</comment>
<comment type="subcellular location">
    <subcellularLocation>
        <location evidence="1">Lysosome</location>
    </subcellularLocation>
</comment>
<organism>
    <name type="scientific">Mus musculus</name>
    <name type="common">Mouse</name>
    <dbReference type="NCBI Taxonomy" id="10090"/>
    <lineage>
        <taxon>Eukaryota</taxon>
        <taxon>Metazoa</taxon>
        <taxon>Chordata</taxon>
        <taxon>Craniata</taxon>
        <taxon>Vertebrata</taxon>
        <taxon>Euteleostomi</taxon>
        <taxon>Mammalia</taxon>
        <taxon>Eutheria</taxon>
        <taxon>Euarchontoglires</taxon>
        <taxon>Glires</taxon>
        <taxon>Rodentia</taxon>
        <taxon>Myomorpha</taxon>
        <taxon>Muroidea</taxon>
        <taxon>Muridae</taxon>
        <taxon>Murinae</taxon>
        <taxon>Mus</taxon>
        <taxon>Mus</taxon>
    </lineage>
</organism>
<proteinExistence type="evidence at protein level"/>
<evidence type="ECO:0000250" key="1">
    <source>
        <dbReference type="UniProtKB" id="P07602"/>
    </source>
</evidence>
<evidence type="ECO:0000255" key="2">
    <source>
        <dbReference type="PROSITE-ProRule" id="PRU00414"/>
    </source>
</evidence>
<evidence type="ECO:0000255" key="3">
    <source>
        <dbReference type="PROSITE-ProRule" id="PRU00415"/>
    </source>
</evidence>
<evidence type="ECO:0000269" key="4">
    <source>
    </source>
</evidence>
<evidence type="ECO:0000269" key="5">
    <source>
    </source>
</evidence>
<evidence type="ECO:0000269" key="6">
    <source>
    </source>
</evidence>
<evidence type="ECO:0000269" key="7">
    <source>
    </source>
</evidence>
<evidence type="ECO:0000305" key="8"/>
<evidence type="ECO:0007829" key="9">
    <source>
        <dbReference type="PDB" id="5U85"/>
    </source>
</evidence>
<evidence type="ECO:0007829" key="10">
    <source>
        <dbReference type="PDB" id="7P4T"/>
    </source>
</evidence>
<dbReference type="EMBL" id="S36200">
    <property type="protein sequence ID" value="AAB22175.1"/>
    <property type="molecule type" value="mRNA"/>
</dbReference>
<dbReference type="EMBL" id="S71616">
    <property type="protein sequence ID" value="AAB31059.1"/>
    <property type="molecule type" value="mRNA"/>
</dbReference>
<dbReference type="EMBL" id="U27340">
    <property type="protein sequence ID" value="AAA92567.1"/>
    <property type="molecule type" value="mRNA"/>
</dbReference>
<dbReference type="EMBL" id="U57999">
    <property type="protein sequence ID" value="AAB02695.1"/>
    <property type="molecule type" value="Genomic_DNA"/>
</dbReference>
<dbReference type="CCDS" id="CCDS35911.1"/>
<dbReference type="PIR" id="JH0604">
    <property type="entry name" value="JH0604"/>
</dbReference>
<dbReference type="RefSeq" id="NP_001139592.1">
    <property type="nucleotide sequence ID" value="NM_001146120.1"/>
</dbReference>
<dbReference type="RefSeq" id="NP_001139593.1">
    <property type="nucleotide sequence ID" value="NM_001146121.1"/>
</dbReference>
<dbReference type="RefSeq" id="NP_001139594.1">
    <property type="nucleotide sequence ID" value="NM_001146122.1"/>
</dbReference>
<dbReference type="RefSeq" id="NP_001139595.1">
    <property type="nucleotide sequence ID" value="NM_001146123.1"/>
</dbReference>
<dbReference type="RefSeq" id="NP_001139596.1">
    <property type="nucleotide sequence ID" value="NM_001146124.1"/>
</dbReference>
<dbReference type="RefSeq" id="NP_035309.3">
    <property type="nucleotide sequence ID" value="NM_011179.3"/>
</dbReference>
<dbReference type="PDB" id="5NXB">
    <property type="method" value="X-ray"/>
    <property type="resolution" value="3.60 A"/>
    <property type="chains" value="C/D=59-143"/>
</dbReference>
<dbReference type="PDB" id="5U85">
    <property type="method" value="X-ray"/>
    <property type="resolution" value="1.65 A"/>
    <property type="chains" value="A/B=438-519"/>
</dbReference>
<dbReference type="PDB" id="7P4T">
    <property type="method" value="X-ray"/>
    <property type="resolution" value="3.17 A"/>
    <property type="chains" value="A/B/C/D=60-142"/>
</dbReference>
<dbReference type="PDBsum" id="5NXB"/>
<dbReference type="PDBsum" id="5U85"/>
<dbReference type="PDBsum" id="7P4T"/>
<dbReference type="SMR" id="Q61207"/>
<dbReference type="BioGRID" id="202410">
    <property type="interactions" value="103"/>
</dbReference>
<dbReference type="FunCoup" id="Q61207">
    <property type="interactions" value="1810"/>
</dbReference>
<dbReference type="IntAct" id="Q61207">
    <property type="interactions" value="3"/>
</dbReference>
<dbReference type="STRING" id="10090.ENSMUSP00000137476"/>
<dbReference type="GlyConnect" id="2615">
    <property type="glycosylation" value="22 N-Linked glycans (4 sites)"/>
</dbReference>
<dbReference type="GlyCosmos" id="Q61207">
    <property type="glycosylation" value="4 sites, 21 glycans"/>
</dbReference>
<dbReference type="GlyGen" id="Q61207">
    <property type="glycosylation" value="6 sites, 22 N-linked glycans (4 sites), 1 O-linked glycan (2 sites)"/>
</dbReference>
<dbReference type="iPTMnet" id="Q61207"/>
<dbReference type="PhosphoSitePlus" id="Q61207"/>
<dbReference type="SwissPalm" id="Q61207"/>
<dbReference type="jPOST" id="Q61207"/>
<dbReference type="PaxDb" id="10090-ENSMUSP00000101105"/>
<dbReference type="PeptideAtlas" id="Q61207"/>
<dbReference type="ProteomicsDB" id="256702"/>
<dbReference type="Pumba" id="Q61207"/>
<dbReference type="Antibodypedia" id="1388">
    <property type="antibodies" value="508 antibodies from 36 providers"/>
</dbReference>
<dbReference type="DNASU" id="19156"/>
<dbReference type="Ensembl" id="ENSMUST00000179238.8">
    <property type="protein sequence ID" value="ENSMUSP00000137476.2"/>
    <property type="gene ID" value="ENSMUSG00000004207.16"/>
</dbReference>
<dbReference type="GeneID" id="19156"/>
<dbReference type="KEGG" id="mmu:19156"/>
<dbReference type="UCSC" id="uc033fpi.1">
    <property type="organism name" value="mouse"/>
</dbReference>
<dbReference type="AGR" id="MGI:97783"/>
<dbReference type="CTD" id="5660"/>
<dbReference type="MGI" id="MGI:97783">
    <property type="gene designation" value="Psap"/>
</dbReference>
<dbReference type="VEuPathDB" id="HostDB:ENSMUSG00000004207"/>
<dbReference type="eggNOG" id="KOG1340">
    <property type="taxonomic scope" value="Eukaryota"/>
</dbReference>
<dbReference type="GeneTree" id="ENSGT00940000156695"/>
<dbReference type="InParanoid" id="Q61207"/>
<dbReference type="OMA" id="DICVHAG"/>
<dbReference type="OrthoDB" id="69496at2759"/>
<dbReference type="PhylomeDB" id="Q61207"/>
<dbReference type="Reactome" id="R-MMU-114608">
    <property type="pathway name" value="Platelet degranulation"/>
</dbReference>
<dbReference type="Reactome" id="R-MMU-375276">
    <property type="pathway name" value="Peptide ligand-binding receptors"/>
</dbReference>
<dbReference type="Reactome" id="R-MMU-418594">
    <property type="pathway name" value="G alpha (i) signalling events"/>
</dbReference>
<dbReference type="Reactome" id="R-MMU-6798695">
    <property type="pathway name" value="Neutrophil degranulation"/>
</dbReference>
<dbReference type="Reactome" id="R-MMU-9840310">
    <property type="pathway name" value="Glycosphingolipid catabolism"/>
</dbReference>
<dbReference type="BioGRID-ORCS" id="19156">
    <property type="hits" value="1 hit in 79 CRISPR screens"/>
</dbReference>
<dbReference type="ChiTaRS" id="Psap">
    <property type="organism name" value="mouse"/>
</dbReference>
<dbReference type="PRO" id="PR:Q61207"/>
<dbReference type="Proteomes" id="UP000000589">
    <property type="component" value="Chromosome 10"/>
</dbReference>
<dbReference type="RNAct" id="Q61207">
    <property type="molecule type" value="protein"/>
</dbReference>
<dbReference type="Bgee" id="ENSMUSG00000004207">
    <property type="expression patterns" value="Expressed in stroma of bone marrow and 327 other cell types or tissues"/>
</dbReference>
<dbReference type="ExpressionAtlas" id="Q61207">
    <property type="expression patterns" value="baseline and differential"/>
</dbReference>
<dbReference type="GO" id="GO:0016235">
    <property type="term" value="C:aggresome"/>
    <property type="evidence" value="ECO:0000314"/>
    <property type="project" value="MGI"/>
</dbReference>
<dbReference type="GO" id="GO:0005737">
    <property type="term" value="C:cytoplasm"/>
    <property type="evidence" value="ECO:0000314"/>
    <property type="project" value="MGI"/>
</dbReference>
<dbReference type="GO" id="GO:0005576">
    <property type="term" value="C:extracellular region"/>
    <property type="evidence" value="ECO:0000314"/>
    <property type="project" value="UniProtKB"/>
</dbReference>
<dbReference type="GO" id="GO:0005615">
    <property type="term" value="C:extracellular space"/>
    <property type="evidence" value="ECO:0007005"/>
    <property type="project" value="BHF-UCL"/>
</dbReference>
<dbReference type="GO" id="GO:0005770">
    <property type="term" value="C:late endosome"/>
    <property type="evidence" value="ECO:0000250"/>
    <property type="project" value="UniProtKB"/>
</dbReference>
<dbReference type="GO" id="GO:0005764">
    <property type="term" value="C:lysosome"/>
    <property type="evidence" value="ECO:0000314"/>
    <property type="project" value="MGI"/>
</dbReference>
<dbReference type="GO" id="GO:0016020">
    <property type="term" value="C:membrane"/>
    <property type="evidence" value="ECO:0007669"/>
    <property type="project" value="GOC"/>
</dbReference>
<dbReference type="GO" id="GO:0005739">
    <property type="term" value="C:mitochondrion"/>
    <property type="evidence" value="ECO:0007005"/>
    <property type="project" value="MGI"/>
</dbReference>
<dbReference type="GO" id="GO:0001664">
    <property type="term" value="F:G protein-coupled receptor binding"/>
    <property type="evidence" value="ECO:0000353"/>
    <property type="project" value="ParkinsonsUK-UCL"/>
</dbReference>
<dbReference type="GO" id="GO:0042802">
    <property type="term" value="F:identical protein binding"/>
    <property type="evidence" value="ECO:0000353"/>
    <property type="project" value="MGI"/>
</dbReference>
<dbReference type="GO" id="GO:0030882">
    <property type="term" value="F:lipid antigen binding"/>
    <property type="evidence" value="ECO:0000314"/>
    <property type="project" value="MGI"/>
</dbReference>
<dbReference type="GO" id="GO:0002020">
    <property type="term" value="F:protease binding"/>
    <property type="evidence" value="ECO:0000266"/>
    <property type="project" value="MGI"/>
</dbReference>
<dbReference type="GO" id="GO:0007193">
    <property type="term" value="P:adenylate cyclase-inhibiting G protein-coupled receptor signaling pathway"/>
    <property type="evidence" value="ECO:0000314"/>
    <property type="project" value="ParkinsonsUK-UCL"/>
</dbReference>
<dbReference type="GO" id="GO:0019882">
    <property type="term" value="P:antigen processing and presentation"/>
    <property type="evidence" value="ECO:0000315"/>
    <property type="project" value="MGI"/>
</dbReference>
<dbReference type="GO" id="GO:0034614">
    <property type="term" value="P:cellular response to reactive oxygen species"/>
    <property type="evidence" value="ECO:0000314"/>
    <property type="project" value="ParkinsonsUK-UCL"/>
</dbReference>
<dbReference type="GO" id="GO:0006672">
    <property type="term" value="P:ceramide metabolic process"/>
    <property type="evidence" value="ECO:0000315"/>
    <property type="project" value="MGI"/>
</dbReference>
<dbReference type="GO" id="GO:0021702">
    <property type="term" value="P:cerebellar Purkinje cell differentiation"/>
    <property type="evidence" value="ECO:0000315"/>
    <property type="project" value="MGI"/>
</dbReference>
<dbReference type="GO" id="GO:0090102">
    <property type="term" value="P:cochlea development"/>
    <property type="evidence" value="ECO:0000315"/>
    <property type="project" value="MGI"/>
</dbReference>
<dbReference type="GO" id="GO:0003335">
    <property type="term" value="P:corneocyte development"/>
    <property type="evidence" value="ECO:0000315"/>
    <property type="project" value="MGI"/>
</dbReference>
<dbReference type="GO" id="GO:1903575">
    <property type="term" value="P:cornified envelope assembly"/>
    <property type="evidence" value="ECO:0000315"/>
    <property type="project" value="MGI"/>
</dbReference>
<dbReference type="GO" id="GO:0048589">
    <property type="term" value="P:developmental growth"/>
    <property type="evidence" value="ECO:0000315"/>
    <property type="project" value="MGI"/>
</dbReference>
<dbReference type="GO" id="GO:0060742">
    <property type="term" value="P:epithelial cell differentiation involved in prostate gland development"/>
    <property type="evidence" value="ECO:0000315"/>
    <property type="project" value="MGI"/>
</dbReference>
<dbReference type="GO" id="GO:0006683">
    <property type="term" value="P:galactosylceramide catabolic process"/>
    <property type="evidence" value="ECO:0000315"/>
    <property type="project" value="MGI"/>
</dbReference>
<dbReference type="GO" id="GO:0010467">
    <property type="term" value="P:gene expression"/>
    <property type="evidence" value="ECO:0000314"/>
    <property type="project" value="MGI"/>
</dbReference>
<dbReference type="GO" id="GO:0006678">
    <property type="term" value="P:glucosylceramide metabolic process"/>
    <property type="evidence" value="ECO:0000315"/>
    <property type="project" value="MGI"/>
</dbReference>
<dbReference type="GO" id="GO:0006664">
    <property type="term" value="P:glycolipid metabolic process"/>
    <property type="evidence" value="ECO:0000315"/>
    <property type="project" value="MGI"/>
</dbReference>
<dbReference type="GO" id="GO:0070841">
    <property type="term" value="P:inclusion body assembly"/>
    <property type="evidence" value="ECO:0000315"/>
    <property type="project" value="MGI"/>
</dbReference>
<dbReference type="GO" id="GO:0006886">
    <property type="term" value="P:intracellular protein transport"/>
    <property type="evidence" value="ECO:0000315"/>
    <property type="project" value="MGI"/>
</dbReference>
<dbReference type="GO" id="GO:1905146">
    <property type="term" value="P:lysosomal protein catabolic process"/>
    <property type="evidence" value="ECO:0000315"/>
    <property type="project" value="MGI"/>
</dbReference>
<dbReference type="GO" id="GO:0007041">
    <property type="term" value="P:lysosomal transport"/>
    <property type="evidence" value="ECO:0000250"/>
    <property type="project" value="UniProtKB"/>
</dbReference>
<dbReference type="GO" id="GO:0006643">
    <property type="term" value="P:membrane lipid metabolic process"/>
    <property type="evidence" value="ECO:0000314"/>
    <property type="project" value="MGI"/>
</dbReference>
<dbReference type="GO" id="GO:0060073">
    <property type="term" value="P:micturition"/>
    <property type="evidence" value="ECO:0000315"/>
    <property type="project" value="MGI"/>
</dbReference>
<dbReference type="GO" id="GO:0042552">
    <property type="term" value="P:myelination"/>
    <property type="evidence" value="ECO:0000315"/>
    <property type="project" value="MGI"/>
</dbReference>
<dbReference type="GO" id="GO:0050877">
    <property type="term" value="P:nervous system process"/>
    <property type="evidence" value="ECO:0000315"/>
    <property type="project" value="MGI"/>
</dbReference>
<dbReference type="GO" id="GO:0050885">
    <property type="term" value="P:neuromuscular process controlling balance"/>
    <property type="evidence" value="ECO:0000315"/>
    <property type="project" value="MGI"/>
</dbReference>
<dbReference type="GO" id="GO:0001865">
    <property type="term" value="P:NK T cell differentiation"/>
    <property type="evidence" value="ECO:0000315"/>
    <property type="project" value="MGI"/>
</dbReference>
<dbReference type="GO" id="GO:0043410">
    <property type="term" value="P:positive regulation of MAPK cascade"/>
    <property type="evidence" value="ECO:0000314"/>
    <property type="project" value="ParkinsonsUK-UCL"/>
</dbReference>
<dbReference type="GO" id="GO:0060736">
    <property type="term" value="P:prostate gland growth"/>
    <property type="evidence" value="ECO:0000315"/>
    <property type="project" value="MGI"/>
</dbReference>
<dbReference type="GO" id="GO:0009306">
    <property type="term" value="P:protein secretion"/>
    <property type="evidence" value="ECO:0000315"/>
    <property type="project" value="MGI"/>
</dbReference>
<dbReference type="GO" id="GO:0019216">
    <property type="term" value="P:regulation of lipid metabolic process"/>
    <property type="evidence" value="ECO:0000315"/>
    <property type="project" value="MGI"/>
</dbReference>
<dbReference type="GO" id="GO:0043408">
    <property type="term" value="P:regulation of MAPK cascade"/>
    <property type="evidence" value="ECO:0000315"/>
    <property type="project" value="MGI"/>
</dbReference>
<dbReference type="GO" id="GO:0007605">
    <property type="term" value="P:sensory perception of sound"/>
    <property type="evidence" value="ECO:0000315"/>
    <property type="project" value="MGI"/>
</dbReference>
<dbReference type="GO" id="GO:0006665">
    <property type="term" value="P:sphingolipid metabolic process"/>
    <property type="evidence" value="ECO:0000315"/>
    <property type="project" value="MGI"/>
</dbReference>
<dbReference type="GO" id="GO:0090659">
    <property type="term" value="P:walking behavior"/>
    <property type="evidence" value="ECO:0000315"/>
    <property type="project" value="MGI"/>
</dbReference>
<dbReference type="FunFam" id="1.10.225.10:FF:000002">
    <property type="entry name" value="prosaposin isoform X2"/>
    <property type="match status" value="2"/>
</dbReference>
<dbReference type="FunFam" id="1.10.225.10:FF:000004">
    <property type="entry name" value="prosaposin isoform X2"/>
    <property type="match status" value="1"/>
</dbReference>
<dbReference type="FunFam" id="1.10.225.10:FF:000005">
    <property type="entry name" value="prosaposin isoform X2"/>
    <property type="match status" value="1"/>
</dbReference>
<dbReference type="Gene3D" id="1.10.225.10">
    <property type="entry name" value="Saposin-like"/>
    <property type="match status" value="4"/>
</dbReference>
<dbReference type="InterPro" id="IPR003119">
    <property type="entry name" value="SAP_A"/>
</dbReference>
<dbReference type="InterPro" id="IPR007856">
    <property type="entry name" value="SapB_1"/>
</dbReference>
<dbReference type="InterPro" id="IPR008138">
    <property type="entry name" value="SapB_2"/>
</dbReference>
<dbReference type="InterPro" id="IPR008373">
    <property type="entry name" value="Saposin"/>
</dbReference>
<dbReference type="InterPro" id="IPR011001">
    <property type="entry name" value="Saposin-like"/>
</dbReference>
<dbReference type="InterPro" id="IPR021165">
    <property type="entry name" value="Saposin_chordata"/>
</dbReference>
<dbReference type="InterPro" id="IPR008139">
    <property type="entry name" value="SaposinB_dom"/>
</dbReference>
<dbReference type="InterPro" id="IPR051428">
    <property type="entry name" value="Sphingo_Act-Surfact_Prot"/>
</dbReference>
<dbReference type="PANTHER" id="PTHR11480:SF3">
    <property type="entry name" value="BCDNA.GH08312"/>
    <property type="match status" value="1"/>
</dbReference>
<dbReference type="PANTHER" id="PTHR11480">
    <property type="entry name" value="SAPOSIN-RELATED"/>
    <property type="match status" value="1"/>
</dbReference>
<dbReference type="Pfam" id="PF02199">
    <property type="entry name" value="SapA"/>
    <property type="match status" value="2"/>
</dbReference>
<dbReference type="Pfam" id="PF05184">
    <property type="entry name" value="SapB_1"/>
    <property type="match status" value="3"/>
</dbReference>
<dbReference type="Pfam" id="PF03489">
    <property type="entry name" value="SapB_2"/>
    <property type="match status" value="3"/>
</dbReference>
<dbReference type="PIRSF" id="PIRSF002431">
    <property type="entry name" value="Saposin"/>
    <property type="match status" value="1"/>
</dbReference>
<dbReference type="PRINTS" id="PR01797">
    <property type="entry name" value="SAPOSIN"/>
</dbReference>
<dbReference type="SMART" id="SM00162">
    <property type="entry name" value="SAPA"/>
    <property type="match status" value="2"/>
</dbReference>
<dbReference type="SMART" id="SM00741">
    <property type="entry name" value="SapB"/>
    <property type="match status" value="4"/>
</dbReference>
<dbReference type="SUPFAM" id="SSF47862">
    <property type="entry name" value="Saposin"/>
    <property type="match status" value="3"/>
</dbReference>
<dbReference type="PROSITE" id="PS51110">
    <property type="entry name" value="SAP_A"/>
    <property type="match status" value="2"/>
</dbReference>
<dbReference type="PROSITE" id="PS50015">
    <property type="entry name" value="SAP_B"/>
    <property type="match status" value="4"/>
</dbReference>